<dbReference type="EC" id="6.3.2.3" evidence="2"/>
<dbReference type="EMBL" id="AE016828">
    <property type="protein sequence ID" value="AAO91366.1"/>
    <property type="molecule type" value="Genomic_DNA"/>
</dbReference>
<dbReference type="RefSeq" id="NP_820852.1">
    <property type="nucleotide sequence ID" value="NC_002971.4"/>
</dbReference>
<dbReference type="RefSeq" id="WP_005770275.1">
    <property type="nucleotide sequence ID" value="NZ_CCYB01000008.1"/>
</dbReference>
<dbReference type="SMR" id="Q83AL0"/>
<dbReference type="STRING" id="227377.CBU_1875"/>
<dbReference type="DNASU" id="1209788"/>
<dbReference type="EnsemblBacteria" id="AAO91366">
    <property type="protein sequence ID" value="AAO91366"/>
    <property type="gene ID" value="CBU_1875"/>
</dbReference>
<dbReference type="GeneID" id="1209788"/>
<dbReference type="KEGG" id="cbu:CBU_1875"/>
<dbReference type="PATRIC" id="fig|227377.7.peg.1857"/>
<dbReference type="eggNOG" id="COG0189">
    <property type="taxonomic scope" value="Bacteria"/>
</dbReference>
<dbReference type="HOGENOM" id="CLU_068239_0_0_6"/>
<dbReference type="OrthoDB" id="9785415at2"/>
<dbReference type="UniPathway" id="UPA00142">
    <property type="reaction ID" value="UER00210"/>
</dbReference>
<dbReference type="Proteomes" id="UP000002671">
    <property type="component" value="Chromosome"/>
</dbReference>
<dbReference type="GO" id="GO:0005737">
    <property type="term" value="C:cytoplasm"/>
    <property type="evidence" value="ECO:0000318"/>
    <property type="project" value="GO_Central"/>
</dbReference>
<dbReference type="GO" id="GO:0005524">
    <property type="term" value="F:ATP binding"/>
    <property type="evidence" value="ECO:0007669"/>
    <property type="project" value="UniProtKB-UniRule"/>
</dbReference>
<dbReference type="GO" id="GO:0004363">
    <property type="term" value="F:glutathione synthase activity"/>
    <property type="evidence" value="ECO:0000318"/>
    <property type="project" value="GO_Central"/>
</dbReference>
<dbReference type="GO" id="GO:0046872">
    <property type="term" value="F:metal ion binding"/>
    <property type="evidence" value="ECO:0007669"/>
    <property type="project" value="UniProtKB-KW"/>
</dbReference>
<dbReference type="FunFam" id="3.30.470.20:FF:000010">
    <property type="entry name" value="Glutathione synthetase"/>
    <property type="match status" value="1"/>
</dbReference>
<dbReference type="FunFam" id="3.40.50.20:FF:000009">
    <property type="entry name" value="Glutathione synthetase"/>
    <property type="match status" value="1"/>
</dbReference>
<dbReference type="Gene3D" id="3.40.50.20">
    <property type="match status" value="1"/>
</dbReference>
<dbReference type="Gene3D" id="3.30.1490.20">
    <property type="entry name" value="ATP-grasp fold, A domain"/>
    <property type="match status" value="1"/>
</dbReference>
<dbReference type="Gene3D" id="3.30.470.20">
    <property type="entry name" value="ATP-grasp fold, B domain"/>
    <property type="match status" value="1"/>
</dbReference>
<dbReference type="HAMAP" id="MF_00162">
    <property type="entry name" value="GSH_S"/>
    <property type="match status" value="1"/>
</dbReference>
<dbReference type="InterPro" id="IPR011761">
    <property type="entry name" value="ATP-grasp"/>
</dbReference>
<dbReference type="InterPro" id="IPR013815">
    <property type="entry name" value="ATP_grasp_subdomain_1"/>
</dbReference>
<dbReference type="InterPro" id="IPR006284">
    <property type="entry name" value="Glut_synth_pro"/>
</dbReference>
<dbReference type="InterPro" id="IPR004218">
    <property type="entry name" value="GSHS_ATP-bd"/>
</dbReference>
<dbReference type="InterPro" id="IPR004215">
    <property type="entry name" value="GSHS_N"/>
</dbReference>
<dbReference type="InterPro" id="IPR016185">
    <property type="entry name" value="PreATP-grasp_dom_sf"/>
</dbReference>
<dbReference type="NCBIfam" id="TIGR01380">
    <property type="entry name" value="glut_syn"/>
    <property type="match status" value="1"/>
</dbReference>
<dbReference type="NCBIfam" id="NF003573">
    <property type="entry name" value="PRK05246.1"/>
    <property type="match status" value="1"/>
</dbReference>
<dbReference type="PANTHER" id="PTHR21621:SF4">
    <property type="entry name" value="GLUTATHIONE SYNTHETASE"/>
    <property type="match status" value="1"/>
</dbReference>
<dbReference type="PANTHER" id="PTHR21621">
    <property type="entry name" value="RIBOSOMAL PROTEIN S6 MODIFICATION PROTEIN"/>
    <property type="match status" value="1"/>
</dbReference>
<dbReference type="Pfam" id="PF02955">
    <property type="entry name" value="GSH-S_ATP"/>
    <property type="match status" value="1"/>
</dbReference>
<dbReference type="Pfam" id="PF02951">
    <property type="entry name" value="GSH-S_N"/>
    <property type="match status" value="1"/>
</dbReference>
<dbReference type="SUPFAM" id="SSF56059">
    <property type="entry name" value="Glutathione synthetase ATP-binding domain-like"/>
    <property type="match status" value="1"/>
</dbReference>
<dbReference type="SUPFAM" id="SSF52440">
    <property type="entry name" value="PreATP-grasp domain"/>
    <property type="match status" value="1"/>
</dbReference>
<dbReference type="PROSITE" id="PS50975">
    <property type="entry name" value="ATP_GRASP"/>
    <property type="match status" value="1"/>
</dbReference>
<protein>
    <recommendedName>
        <fullName evidence="2">Glutathione synthetase</fullName>
        <ecNumber evidence="2">6.3.2.3</ecNumber>
    </recommendedName>
    <alternativeName>
        <fullName evidence="2">GSH synthetase</fullName>
        <shortName evidence="2">GSH-S</shortName>
        <shortName evidence="2">GSHase</shortName>
    </alternativeName>
    <alternativeName>
        <fullName evidence="2">Glutathione synthase</fullName>
    </alternativeName>
</protein>
<gene>
    <name evidence="2" type="primary">gshB</name>
    <name type="ordered locus">CBU_1875</name>
</gene>
<organism>
    <name type="scientific">Coxiella burnetii (strain RSA 493 / Nine Mile phase I)</name>
    <dbReference type="NCBI Taxonomy" id="227377"/>
    <lineage>
        <taxon>Bacteria</taxon>
        <taxon>Pseudomonadati</taxon>
        <taxon>Pseudomonadota</taxon>
        <taxon>Gammaproteobacteria</taxon>
        <taxon>Legionellales</taxon>
        <taxon>Coxiellaceae</taxon>
        <taxon>Coxiella</taxon>
    </lineage>
</organism>
<keyword id="KW-0067">ATP-binding</keyword>
<keyword id="KW-0317">Glutathione biosynthesis</keyword>
<keyword id="KW-0436">Ligase</keyword>
<keyword id="KW-0460">Magnesium</keyword>
<keyword id="KW-0464">Manganese</keyword>
<keyword id="KW-0479">Metal-binding</keyword>
<keyword id="KW-0547">Nucleotide-binding</keyword>
<keyword id="KW-1185">Reference proteome</keyword>
<comment type="catalytic activity">
    <reaction evidence="2">
        <text>gamma-L-glutamyl-L-cysteine + glycine + ATP = glutathione + ADP + phosphate + H(+)</text>
        <dbReference type="Rhea" id="RHEA:13557"/>
        <dbReference type="ChEBI" id="CHEBI:15378"/>
        <dbReference type="ChEBI" id="CHEBI:30616"/>
        <dbReference type="ChEBI" id="CHEBI:43474"/>
        <dbReference type="ChEBI" id="CHEBI:57305"/>
        <dbReference type="ChEBI" id="CHEBI:57925"/>
        <dbReference type="ChEBI" id="CHEBI:58173"/>
        <dbReference type="ChEBI" id="CHEBI:456216"/>
        <dbReference type="EC" id="6.3.2.3"/>
    </reaction>
</comment>
<comment type="cofactor">
    <cofactor evidence="1">
        <name>Mg(2+)</name>
        <dbReference type="ChEBI" id="CHEBI:18420"/>
    </cofactor>
    <cofactor evidence="1">
        <name>Mn(2+)</name>
        <dbReference type="ChEBI" id="CHEBI:29035"/>
    </cofactor>
    <text evidence="1">Binds 1 Mg(2+) or Mn(2+) ion per subunit.</text>
</comment>
<comment type="pathway">
    <text evidence="2">Sulfur metabolism; glutathione biosynthesis; glutathione from L-cysteine and L-glutamate: step 2/2.</text>
</comment>
<comment type="similarity">
    <text evidence="2">Belongs to the prokaryotic GSH synthase family.</text>
</comment>
<accession>Q83AL0</accession>
<feature type="chain" id="PRO_0000197464" description="Glutathione synthetase">
    <location>
        <begin position="1"/>
        <end position="321"/>
    </location>
</feature>
<feature type="domain" description="ATP-grasp" evidence="2">
    <location>
        <begin position="125"/>
        <end position="311"/>
    </location>
</feature>
<feature type="binding site" evidence="2">
    <location>
        <begin position="151"/>
        <end position="208"/>
    </location>
    <ligand>
        <name>ATP</name>
        <dbReference type="ChEBI" id="CHEBI:30616"/>
    </ligand>
</feature>
<feature type="binding site" evidence="2">
    <location>
        <position position="282"/>
    </location>
    <ligand>
        <name>Mg(2+)</name>
        <dbReference type="ChEBI" id="CHEBI:18420"/>
    </ligand>
</feature>
<feature type="binding site" evidence="2">
    <location>
        <position position="284"/>
    </location>
    <ligand>
        <name>Mg(2+)</name>
        <dbReference type="ChEBI" id="CHEBI:18420"/>
    </ligand>
</feature>
<name>GSHB_COXBU</name>
<reference key="1">
    <citation type="journal article" date="2003" name="Proc. Natl. Acad. Sci. U.S.A.">
        <title>Complete genome sequence of the Q-fever pathogen, Coxiella burnetii.</title>
        <authorList>
            <person name="Seshadri R."/>
            <person name="Paulsen I.T."/>
            <person name="Eisen J.A."/>
            <person name="Read T.D."/>
            <person name="Nelson K.E."/>
            <person name="Nelson W.C."/>
            <person name="Ward N.L."/>
            <person name="Tettelin H."/>
            <person name="Davidsen T.M."/>
            <person name="Beanan M.J."/>
            <person name="DeBoy R.T."/>
            <person name="Daugherty S.C."/>
            <person name="Brinkac L.M."/>
            <person name="Madupu R."/>
            <person name="Dodson R.J."/>
            <person name="Khouri H.M."/>
            <person name="Lee K.H."/>
            <person name="Carty H.A."/>
            <person name="Scanlan D."/>
            <person name="Heinzen R.A."/>
            <person name="Thompson H.A."/>
            <person name="Samuel J.E."/>
            <person name="Fraser C.M."/>
            <person name="Heidelberg J.F."/>
        </authorList>
    </citation>
    <scope>NUCLEOTIDE SEQUENCE [LARGE SCALE GENOMIC DNA]</scope>
    <source>
        <strain>RSA 493 / Nine Mile phase I</strain>
    </source>
</reference>
<proteinExistence type="inferred from homology"/>
<evidence type="ECO:0000250" key="1"/>
<evidence type="ECO:0000255" key="2">
    <source>
        <dbReference type="HAMAP-Rule" id="MF_00162"/>
    </source>
</evidence>
<sequence length="321" mass="36319">MNLKVGVLMDPIANIAIHKDTTFAMLLALQARQHEVYYLEPADIFLRNEKILGSMRRLQVADDPSQWFNLSESEIKPLHALDVLLMRKDPPFNMSYVYLTYLLELAEKQGLFVVNKPASLRDANEKLFTGWFPHCTPKTLVTSRKAILQEFIREQKEVVIKPLGAMAGESIFYLTVNDPNIPVVIETMTANGHQLVMAQRFIPEVKSGDKRIILIDGEPIPYTLARIPPKGDFRGNLARGAKGEGRELTDRDRWICEQVGPTLRKKGLWFVGLDIIGDYLTEINVTSPTGVRELQAQFDVDIAGQFIAFLETKYATTTDIE</sequence>